<accession>Q8R9X4</accession>
<reference key="1">
    <citation type="journal article" date="2002" name="Genome Res.">
        <title>A complete sequence of the T. tengcongensis genome.</title>
        <authorList>
            <person name="Bao Q."/>
            <person name="Tian Y."/>
            <person name="Li W."/>
            <person name="Xu Z."/>
            <person name="Xuan Z."/>
            <person name="Hu S."/>
            <person name="Dong W."/>
            <person name="Yang J."/>
            <person name="Chen Y."/>
            <person name="Xue Y."/>
            <person name="Xu Y."/>
            <person name="Lai X."/>
            <person name="Huang L."/>
            <person name="Dong X."/>
            <person name="Ma Y."/>
            <person name="Ling L."/>
            <person name="Tan H."/>
            <person name="Chen R."/>
            <person name="Wang J."/>
            <person name="Yu J."/>
            <person name="Yang H."/>
        </authorList>
    </citation>
    <scope>NUCLEOTIDE SEQUENCE [LARGE SCALE GENOMIC DNA]</scope>
    <source>
        <strain>DSM 15242 / JCM 11007 / NBRC 100824 / MB4</strain>
    </source>
</reference>
<organism>
    <name type="scientific">Caldanaerobacter subterraneus subsp. tengcongensis (strain DSM 15242 / JCM 11007 / NBRC 100824 / MB4)</name>
    <name type="common">Thermoanaerobacter tengcongensis</name>
    <dbReference type="NCBI Taxonomy" id="273068"/>
    <lineage>
        <taxon>Bacteria</taxon>
        <taxon>Bacillati</taxon>
        <taxon>Bacillota</taxon>
        <taxon>Clostridia</taxon>
        <taxon>Thermoanaerobacterales</taxon>
        <taxon>Thermoanaerobacteraceae</taxon>
        <taxon>Caldanaerobacter</taxon>
    </lineage>
</organism>
<evidence type="ECO:0000255" key="1">
    <source>
        <dbReference type="HAMAP-Rule" id="MF_00402"/>
    </source>
</evidence>
<evidence type="ECO:0000305" key="2"/>
<dbReference type="EMBL" id="AE008691">
    <property type="protein sequence ID" value="AAM24679.1"/>
    <property type="molecule type" value="Genomic_DNA"/>
</dbReference>
<dbReference type="RefSeq" id="WP_011025724.1">
    <property type="nucleotide sequence ID" value="NZ_JANUCV010000001.1"/>
</dbReference>
<dbReference type="SMR" id="Q8R9X4"/>
<dbReference type="STRING" id="273068.TTE1457"/>
<dbReference type="KEGG" id="tte:TTE1457"/>
<dbReference type="eggNOG" id="COG0335">
    <property type="taxonomic scope" value="Bacteria"/>
</dbReference>
<dbReference type="HOGENOM" id="CLU_103507_2_1_9"/>
<dbReference type="OrthoDB" id="9803541at2"/>
<dbReference type="Proteomes" id="UP000000555">
    <property type="component" value="Chromosome"/>
</dbReference>
<dbReference type="GO" id="GO:0022625">
    <property type="term" value="C:cytosolic large ribosomal subunit"/>
    <property type="evidence" value="ECO:0007669"/>
    <property type="project" value="TreeGrafter"/>
</dbReference>
<dbReference type="GO" id="GO:0003735">
    <property type="term" value="F:structural constituent of ribosome"/>
    <property type="evidence" value="ECO:0007669"/>
    <property type="project" value="InterPro"/>
</dbReference>
<dbReference type="GO" id="GO:0006412">
    <property type="term" value="P:translation"/>
    <property type="evidence" value="ECO:0007669"/>
    <property type="project" value="UniProtKB-UniRule"/>
</dbReference>
<dbReference type="FunFam" id="2.30.30.790:FF:000001">
    <property type="entry name" value="50S ribosomal protein L19"/>
    <property type="match status" value="1"/>
</dbReference>
<dbReference type="Gene3D" id="2.30.30.790">
    <property type="match status" value="1"/>
</dbReference>
<dbReference type="HAMAP" id="MF_00402">
    <property type="entry name" value="Ribosomal_bL19"/>
    <property type="match status" value="1"/>
</dbReference>
<dbReference type="InterPro" id="IPR001857">
    <property type="entry name" value="Ribosomal_bL19"/>
</dbReference>
<dbReference type="InterPro" id="IPR018257">
    <property type="entry name" value="Ribosomal_bL19_CS"/>
</dbReference>
<dbReference type="InterPro" id="IPR038657">
    <property type="entry name" value="Ribosomal_bL19_sf"/>
</dbReference>
<dbReference type="InterPro" id="IPR008991">
    <property type="entry name" value="Translation_prot_SH3-like_sf"/>
</dbReference>
<dbReference type="NCBIfam" id="TIGR01024">
    <property type="entry name" value="rplS_bact"/>
    <property type="match status" value="1"/>
</dbReference>
<dbReference type="PANTHER" id="PTHR15680:SF9">
    <property type="entry name" value="LARGE RIBOSOMAL SUBUNIT PROTEIN BL19M"/>
    <property type="match status" value="1"/>
</dbReference>
<dbReference type="PANTHER" id="PTHR15680">
    <property type="entry name" value="RIBOSOMAL PROTEIN L19"/>
    <property type="match status" value="1"/>
</dbReference>
<dbReference type="Pfam" id="PF01245">
    <property type="entry name" value="Ribosomal_L19"/>
    <property type="match status" value="1"/>
</dbReference>
<dbReference type="PIRSF" id="PIRSF002191">
    <property type="entry name" value="Ribosomal_L19"/>
    <property type="match status" value="1"/>
</dbReference>
<dbReference type="PRINTS" id="PR00061">
    <property type="entry name" value="RIBOSOMALL19"/>
</dbReference>
<dbReference type="SUPFAM" id="SSF50104">
    <property type="entry name" value="Translation proteins SH3-like domain"/>
    <property type="match status" value="1"/>
</dbReference>
<dbReference type="PROSITE" id="PS01015">
    <property type="entry name" value="RIBOSOMAL_L19"/>
    <property type="match status" value="1"/>
</dbReference>
<comment type="function">
    <text evidence="1">This protein is located at the 30S-50S ribosomal subunit interface and may play a role in the structure and function of the aminoacyl-tRNA binding site.</text>
</comment>
<comment type="similarity">
    <text evidence="1">Belongs to the bacterial ribosomal protein bL19 family.</text>
</comment>
<protein>
    <recommendedName>
        <fullName evidence="1">Large ribosomal subunit protein bL19</fullName>
    </recommendedName>
    <alternativeName>
        <fullName evidence="2">50S ribosomal protein L19</fullName>
    </alternativeName>
</protein>
<feature type="chain" id="PRO_0000163559" description="Large ribosomal subunit protein bL19">
    <location>
        <begin position="1"/>
        <end position="115"/>
    </location>
</feature>
<gene>
    <name evidence="1" type="primary">rplS</name>
    <name type="ordered locus">TTE1457</name>
</gene>
<proteinExistence type="inferred from homology"/>
<sequence>MDLIKAVESEQLKKDITPFNVGDTVRVYYKVIEGDRERIQPFEGIVIKRSGSGLRETFTVRRVSYGVGVERTFPLHSPRLEKIEVIRRGKVRRAKLYYLRKRVGKAATKIKELME</sequence>
<name>RL19_CALS4</name>
<keyword id="KW-1185">Reference proteome</keyword>
<keyword id="KW-0687">Ribonucleoprotein</keyword>
<keyword id="KW-0689">Ribosomal protein</keyword>